<accession>P15992</accession>
<accession>D6VQ71</accession>
<accession>Q6B1V5</accession>
<reference key="1">
    <citation type="journal article" date="1989" name="Mol. Cell. Biol.">
        <title>hsp26 of Saccharomyces cerevisiae is related to the superfamily of small heat shock proteins but is without a demonstrable function.</title>
        <authorList>
            <person name="Susek R.E."/>
            <person name="Lindquist S.L."/>
        </authorList>
    </citation>
    <scope>NUCLEOTIDE SEQUENCE [GENOMIC DNA]</scope>
</reference>
<reference key="2">
    <citation type="journal article" date="1989" name="Gene">
        <title>Structure and expression of a yeast gene encoding the small heat-shock protein Hsp26.</title>
        <authorList>
            <person name="Bossier P."/>
            <person name="Fitch I.T."/>
            <person name="Boucherie H."/>
            <person name="Tuite M.F."/>
        </authorList>
    </citation>
    <scope>NUCLEOTIDE SEQUENCE [GENOMIC DNA]</scope>
    <scope>CLEAVAGE OF INITIATOR METHIONINE</scope>
</reference>
<reference key="3">
    <citation type="journal article" date="1994" name="Yeast">
        <title>Sequence analysis of a 31 kb DNA fragment from the right arm of Saccharomyces cerevisiae chromosome II.</title>
        <authorList>
            <person name="van der Aart Q.J.M."/>
            <person name="Barthe C."/>
            <person name="Doignon F."/>
            <person name="Aigle M."/>
            <person name="Crouzet M."/>
            <person name="Steensma H.Y."/>
        </authorList>
    </citation>
    <scope>NUCLEOTIDE SEQUENCE [GENOMIC DNA]</scope>
    <source>
        <strain>ATCC 204508 / S288c</strain>
    </source>
</reference>
<reference key="4">
    <citation type="journal article" date="1994" name="EMBO J.">
        <title>Complete DNA sequence of yeast chromosome II.</title>
        <authorList>
            <person name="Feldmann H."/>
            <person name="Aigle M."/>
            <person name="Aljinovic G."/>
            <person name="Andre B."/>
            <person name="Baclet M.C."/>
            <person name="Barthe C."/>
            <person name="Baur A."/>
            <person name="Becam A.-M."/>
            <person name="Biteau N."/>
            <person name="Boles E."/>
            <person name="Brandt T."/>
            <person name="Brendel M."/>
            <person name="Brueckner M."/>
            <person name="Bussereau F."/>
            <person name="Christiansen C."/>
            <person name="Contreras R."/>
            <person name="Crouzet M."/>
            <person name="Cziepluch C."/>
            <person name="Demolis N."/>
            <person name="Delaveau T."/>
            <person name="Doignon F."/>
            <person name="Domdey H."/>
            <person name="Duesterhus S."/>
            <person name="Dubois E."/>
            <person name="Dujon B."/>
            <person name="El Bakkoury M."/>
            <person name="Entian K.-D."/>
            <person name="Feuermann M."/>
            <person name="Fiers W."/>
            <person name="Fobo G.M."/>
            <person name="Fritz C."/>
            <person name="Gassenhuber J."/>
            <person name="Glansdorff N."/>
            <person name="Goffeau A."/>
            <person name="Grivell L.A."/>
            <person name="de Haan M."/>
            <person name="Hein C."/>
            <person name="Herbert C.J."/>
            <person name="Hollenberg C.P."/>
            <person name="Holmstroem K."/>
            <person name="Jacq C."/>
            <person name="Jacquet M."/>
            <person name="Jauniaux J.-C."/>
            <person name="Jonniaux J.-L."/>
            <person name="Kallesoee T."/>
            <person name="Kiesau P."/>
            <person name="Kirchrath L."/>
            <person name="Koetter P."/>
            <person name="Korol S."/>
            <person name="Liebl S."/>
            <person name="Logghe M."/>
            <person name="Lohan A.J.E."/>
            <person name="Louis E.J."/>
            <person name="Li Z.Y."/>
            <person name="Maat M.J."/>
            <person name="Mallet L."/>
            <person name="Mannhaupt G."/>
            <person name="Messenguy F."/>
            <person name="Miosga T."/>
            <person name="Molemans F."/>
            <person name="Mueller S."/>
            <person name="Nasr F."/>
            <person name="Obermaier B."/>
            <person name="Perea J."/>
            <person name="Pierard A."/>
            <person name="Piravandi E."/>
            <person name="Pohl F.M."/>
            <person name="Pohl T.M."/>
            <person name="Potier S."/>
            <person name="Proft M."/>
            <person name="Purnelle B."/>
            <person name="Ramezani Rad M."/>
            <person name="Rieger M."/>
            <person name="Rose M."/>
            <person name="Schaaff-Gerstenschlaeger I."/>
            <person name="Scherens B."/>
            <person name="Schwarzlose C."/>
            <person name="Skala J."/>
            <person name="Slonimski P.P."/>
            <person name="Smits P.H.M."/>
            <person name="Souciet J.-L."/>
            <person name="Steensma H.Y."/>
            <person name="Stucka R."/>
            <person name="Urrestarazu L.A."/>
            <person name="van der Aart Q.J.M."/>
            <person name="Van Dyck L."/>
            <person name="Vassarotti A."/>
            <person name="Vetter I."/>
            <person name="Vierendeels F."/>
            <person name="Vissers S."/>
            <person name="Wagner G."/>
            <person name="de Wergifosse P."/>
            <person name="Wolfe K.H."/>
            <person name="Zagulski M."/>
            <person name="Zimmermann F.K."/>
            <person name="Mewes H.-W."/>
            <person name="Kleine K."/>
        </authorList>
    </citation>
    <scope>NUCLEOTIDE SEQUENCE [LARGE SCALE GENOMIC DNA]</scope>
    <source>
        <strain>ATCC 204508 / S288c</strain>
    </source>
</reference>
<reference key="5">
    <citation type="journal article" date="2014" name="G3 (Bethesda)">
        <title>The reference genome sequence of Saccharomyces cerevisiae: Then and now.</title>
        <authorList>
            <person name="Engel S.R."/>
            <person name="Dietrich F.S."/>
            <person name="Fisk D.G."/>
            <person name="Binkley G."/>
            <person name="Balakrishnan R."/>
            <person name="Costanzo M.C."/>
            <person name="Dwight S.S."/>
            <person name="Hitz B.C."/>
            <person name="Karra K."/>
            <person name="Nash R.S."/>
            <person name="Weng S."/>
            <person name="Wong E.D."/>
            <person name="Lloyd P."/>
            <person name="Skrzypek M.S."/>
            <person name="Miyasato S.R."/>
            <person name="Simison M."/>
            <person name="Cherry J.M."/>
        </authorList>
    </citation>
    <scope>GENOME REANNOTATION</scope>
    <source>
        <strain>ATCC 204508 / S288c</strain>
    </source>
</reference>
<reference key="6">
    <citation type="journal article" date="2007" name="Genome Res.">
        <title>Approaching a complete repository of sequence-verified protein-encoding clones for Saccharomyces cerevisiae.</title>
        <authorList>
            <person name="Hu Y."/>
            <person name="Rolfs A."/>
            <person name="Bhullar B."/>
            <person name="Murthy T.V.S."/>
            <person name="Zhu C."/>
            <person name="Berger M.F."/>
            <person name="Camargo A.A."/>
            <person name="Kelley F."/>
            <person name="McCarron S."/>
            <person name="Jepson D."/>
            <person name="Richardson A."/>
            <person name="Raphael J."/>
            <person name="Moreira D."/>
            <person name="Taycher E."/>
            <person name="Zuo D."/>
            <person name="Mohr S."/>
            <person name="Kane M.F."/>
            <person name="Williamson J."/>
            <person name="Simpson A.J.G."/>
            <person name="Bulyk M.L."/>
            <person name="Harlow E."/>
            <person name="Marsischky G."/>
            <person name="Kolodner R.D."/>
            <person name="LaBaer J."/>
        </authorList>
    </citation>
    <scope>NUCLEOTIDE SEQUENCE [GENOMIC DNA]</scope>
    <source>
        <strain>ATCC 204508 / S288c</strain>
    </source>
</reference>
<reference key="7">
    <citation type="journal article" date="2003" name="Nature">
        <title>Global analysis of protein expression in yeast.</title>
        <authorList>
            <person name="Ghaemmaghami S."/>
            <person name="Huh W.-K."/>
            <person name="Bower K."/>
            <person name="Howson R.W."/>
            <person name="Belle A."/>
            <person name="Dephoure N."/>
            <person name="O'Shea E.K."/>
            <person name="Weissman J.S."/>
        </authorList>
    </citation>
    <scope>LEVEL OF PROTEIN EXPRESSION [LARGE SCALE ANALYSIS]</scope>
</reference>
<reference key="8">
    <citation type="journal article" date="2008" name="Mol. Cell. Proteomics">
        <title>A multidimensional chromatography technology for in-depth phosphoproteome analysis.</title>
        <authorList>
            <person name="Albuquerque C.P."/>
            <person name="Smolka M.B."/>
            <person name="Payne S.H."/>
            <person name="Bafna V."/>
            <person name="Eng J."/>
            <person name="Zhou H."/>
        </authorList>
    </citation>
    <scope>PHOSPHORYLATION [LARGE SCALE ANALYSIS] AT THR-42; SER-90 AND THR-163</scope>
    <scope>IDENTIFICATION BY MASS SPECTROMETRY [LARGE SCALE ANALYSIS]</scope>
</reference>
<reference key="9">
    <citation type="journal article" date="2009" name="Science">
        <title>Global analysis of Cdk1 substrate phosphorylation sites provides insights into evolution.</title>
        <authorList>
            <person name="Holt L.J."/>
            <person name="Tuch B.B."/>
            <person name="Villen J."/>
            <person name="Johnson A.D."/>
            <person name="Gygi S.P."/>
            <person name="Morgan D.O."/>
        </authorList>
    </citation>
    <scope>PHOSPHORYLATION [LARGE SCALE ANALYSIS] AT SER-208 AND SER-211</scope>
    <scope>IDENTIFICATION BY MASS SPECTROMETRY [LARGE SCALE ANALYSIS]</scope>
</reference>
<reference key="10">
    <citation type="journal article" date="2012" name="Proc. Natl. Acad. Sci. U.S.A.">
        <title>N-terminal acetylome analyses and functional insights of the N-terminal acetyltransferase NatB.</title>
        <authorList>
            <person name="Van Damme P."/>
            <person name="Lasa M."/>
            <person name="Polevoda B."/>
            <person name="Gazquez C."/>
            <person name="Elosegui-Artola A."/>
            <person name="Kim D.S."/>
            <person name="De Juan-Pardo E."/>
            <person name="Demeyer K."/>
            <person name="Hole K."/>
            <person name="Larrea E."/>
            <person name="Timmerman E."/>
            <person name="Prieto J."/>
            <person name="Arnesen T."/>
            <person name="Sherman F."/>
            <person name="Gevaert K."/>
            <person name="Aldabe R."/>
        </authorList>
    </citation>
    <scope>ACETYLATION [LARGE SCALE ANALYSIS] AT SER-2</scope>
    <scope>CLEAVAGE OF INITIATOR METHIONINE [LARGE SCALE ANALYSIS]</scope>
    <scope>IDENTIFICATION BY MASS SPECTROMETRY [LARGE SCALE ANALYSIS]</scope>
</reference>
<evidence type="ECO:0000255" key="1">
    <source>
        <dbReference type="PROSITE-ProRule" id="PRU00285"/>
    </source>
</evidence>
<evidence type="ECO:0000256" key="2">
    <source>
        <dbReference type="SAM" id="MobiDB-lite"/>
    </source>
</evidence>
<evidence type="ECO:0000269" key="3">
    <source>
    </source>
</evidence>
<evidence type="ECO:0000269" key="4">
    <source>
    </source>
</evidence>
<evidence type="ECO:0000305" key="5"/>
<evidence type="ECO:0007744" key="6">
    <source>
    </source>
</evidence>
<evidence type="ECO:0007744" key="7">
    <source>
    </source>
</evidence>
<evidence type="ECO:0007744" key="8">
    <source>
    </source>
</evidence>
<comment type="function">
    <text>Not known. One of the major polypeptides produced on heat shock.</text>
</comment>
<comment type="subunit">
    <text>Present in large complexes.</text>
</comment>
<comment type="interaction">
    <interactant intactId="EBI-8555">
        <id>P15992</id>
    </interactant>
    <interactant intactId="EBI-8555">
        <id>P15992</id>
        <label>HSP26</label>
    </interactant>
    <organismsDiffer>false</organismsDiffer>
    <experiments>2</experiments>
</comment>
<comment type="developmental stage">
    <text>Expressed during the entry into stationary phase resulting from glucose limitation.</text>
</comment>
<comment type="induction">
    <text>By heat shock, and under other conditions of stress, such as increased salt concentration and starvation.</text>
</comment>
<comment type="miscellaneous">
    <text evidence="3">Present with 19300 molecules/cell in log phase SD medium.</text>
</comment>
<comment type="similarity">
    <text evidence="1">Belongs to the small heat shock protein (HSP20) family.</text>
</comment>
<gene>
    <name type="primary">HSP26</name>
    <name type="ordered locus">YBR072W</name>
    <name type="ORF">YBR0714</name>
</gene>
<organism>
    <name type="scientific">Saccharomyces cerevisiae (strain ATCC 204508 / S288c)</name>
    <name type="common">Baker's yeast</name>
    <dbReference type="NCBI Taxonomy" id="559292"/>
    <lineage>
        <taxon>Eukaryota</taxon>
        <taxon>Fungi</taxon>
        <taxon>Dikarya</taxon>
        <taxon>Ascomycota</taxon>
        <taxon>Saccharomycotina</taxon>
        <taxon>Saccharomycetes</taxon>
        <taxon>Saccharomycetales</taxon>
        <taxon>Saccharomycetaceae</taxon>
        <taxon>Saccharomyces</taxon>
    </lineage>
</organism>
<name>HSP26_YEAST</name>
<keyword id="KW-0002">3D-structure</keyword>
<keyword id="KW-0007">Acetylation</keyword>
<keyword id="KW-0597">Phosphoprotein</keyword>
<keyword id="KW-1185">Reference proteome</keyword>
<keyword id="KW-0346">Stress response</keyword>
<protein>
    <recommendedName>
        <fullName>Heat shock protein 26</fullName>
    </recommendedName>
    <alternativeName>
        <fullName>26 kDa heat shock protein</fullName>
    </alternativeName>
</protein>
<feature type="initiator methionine" description="Removed" evidence="4 8">
    <location>
        <position position="1"/>
    </location>
</feature>
<feature type="chain" id="PRO_0000126004" description="Heat shock protein 26">
    <location>
        <begin position="2"/>
        <end position="214"/>
    </location>
</feature>
<feature type="domain" description="sHSP" evidence="1">
    <location>
        <begin position="86"/>
        <end position="207"/>
    </location>
</feature>
<feature type="region of interest" description="Disordered" evidence="2">
    <location>
        <begin position="192"/>
        <end position="214"/>
    </location>
</feature>
<feature type="compositionally biased region" description="Basic and acidic residues" evidence="2">
    <location>
        <begin position="193"/>
        <end position="205"/>
    </location>
</feature>
<feature type="modified residue" description="N-acetylserine" evidence="8">
    <location>
        <position position="2"/>
    </location>
</feature>
<feature type="modified residue" description="Phosphothreonine" evidence="6">
    <location>
        <position position="42"/>
    </location>
</feature>
<feature type="modified residue" description="Phosphoserine" evidence="6">
    <location>
        <position position="90"/>
    </location>
</feature>
<feature type="modified residue" description="Phosphothreonine" evidence="6">
    <location>
        <position position="163"/>
    </location>
</feature>
<feature type="modified residue" description="Phosphoserine" evidence="7">
    <location>
        <position position="208"/>
    </location>
</feature>
<feature type="modified residue" description="Phosphoserine" evidence="7">
    <location>
        <position position="211"/>
    </location>
</feature>
<feature type="sequence conflict" description="In Ref. 2; AAA79010." evidence="5" ref="2">
    <original>G</original>
    <variation>A</variation>
    <location>
        <position position="32"/>
    </location>
</feature>
<feature type="sequence conflict" description="In Ref. 2; AAA79010." evidence="5" ref="2">
    <original>S</original>
    <variation>C</variation>
    <location>
        <position position="207"/>
    </location>
</feature>
<feature type="sequence conflict" description="In Ref. 6; AAT92994." evidence="5" ref="6">
    <original>W</original>
    <variation>G</variation>
    <location>
        <position position="212"/>
    </location>
</feature>
<dbReference type="EMBL" id="M23871">
    <property type="protein sequence ID" value="AAA66914.1"/>
    <property type="molecule type" value="Genomic_DNA"/>
</dbReference>
<dbReference type="EMBL" id="M26942">
    <property type="protein sequence ID" value="AAA79010.1"/>
    <property type="molecule type" value="Genomic_DNA"/>
</dbReference>
<dbReference type="EMBL" id="X76294">
    <property type="protein sequence ID" value="CAA53929.1"/>
    <property type="molecule type" value="Genomic_DNA"/>
</dbReference>
<dbReference type="EMBL" id="Z35941">
    <property type="protein sequence ID" value="CAA85016.1"/>
    <property type="molecule type" value="Genomic_DNA"/>
</dbReference>
<dbReference type="EMBL" id="AY692975">
    <property type="protein sequence ID" value="AAT92994.1"/>
    <property type="molecule type" value="Genomic_DNA"/>
</dbReference>
<dbReference type="EMBL" id="BK006936">
    <property type="protein sequence ID" value="DAA07191.1"/>
    <property type="molecule type" value="Genomic_DNA"/>
</dbReference>
<dbReference type="PIR" id="S45465">
    <property type="entry name" value="S45465"/>
</dbReference>
<dbReference type="RefSeq" id="NP_009628.1">
    <property type="nucleotide sequence ID" value="NM_001178420.1"/>
</dbReference>
<dbReference type="PDB" id="7OA6">
    <property type="method" value="EM"/>
    <property type="resolution" value="7.80 A"/>
    <property type="chains" value="A/B/I/J/X=1-214"/>
</dbReference>
<dbReference type="PDBsum" id="7OA6"/>
<dbReference type="EMDB" id="EMD-12766"/>
<dbReference type="SMR" id="P15992"/>
<dbReference type="BioGRID" id="32775">
    <property type="interactions" value="144"/>
</dbReference>
<dbReference type="DIP" id="DIP-3988N"/>
<dbReference type="FunCoup" id="P15992">
    <property type="interactions" value="1510"/>
</dbReference>
<dbReference type="IntAct" id="P15992">
    <property type="interactions" value="150"/>
</dbReference>
<dbReference type="MINT" id="P15992"/>
<dbReference type="STRING" id="4932.YBR072W"/>
<dbReference type="CarbonylDB" id="P15992"/>
<dbReference type="iPTMnet" id="P15992"/>
<dbReference type="PaxDb" id="4932-YBR072W"/>
<dbReference type="PeptideAtlas" id="P15992"/>
<dbReference type="TopDownProteomics" id="P15992"/>
<dbReference type="EnsemblFungi" id="YBR072W_mRNA">
    <property type="protein sequence ID" value="YBR072W"/>
    <property type="gene ID" value="YBR072W"/>
</dbReference>
<dbReference type="GeneID" id="852364"/>
<dbReference type="KEGG" id="sce:YBR072W"/>
<dbReference type="AGR" id="SGD:S000000276"/>
<dbReference type="SGD" id="S000000276">
    <property type="gene designation" value="HSP26"/>
</dbReference>
<dbReference type="VEuPathDB" id="FungiDB:YBR072W"/>
<dbReference type="eggNOG" id="KOG0710">
    <property type="taxonomic scope" value="Eukaryota"/>
</dbReference>
<dbReference type="HOGENOM" id="CLU_046737_12_0_1"/>
<dbReference type="InParanoid" id="P15992"/>
<dbReference type="OMA" id="IDIEYHQ"/>
<dbReference type="OrthoDB" id="5511210at2759"/>
<dbReference type="BioCyc" id="YEAST:G3O-29041-MONOMER"/>
<dbReference type="BioGRID-ORCS" id="852364">
    <property type="hits" value="4 hits in 10 CRISPR screens"/>
</dbReference>
<dbReference type="CD-CODE" id="67785C55">
    <property type="entry name" value="Hypersomatic shock foci"/>
</dbReference>
<dbReference type="CD-CODE" id="A777E0F8">
    <property type="entry name" value="P-body"/>
</dbReference>
<dbReference type="CD-CODE" id="E03F929F">
    <property type="entry name" value="Stress granule"/>
</dbReference>
<dbReference type="PRO" id="PR:P15992"/>
<dbReference type="Proteomes" id="UP000002311">
    <property type="component" value="Chromosome II"/>
</dbReference>
<dbReference type="RNAct" id="P15992">
    <property type="molecule type" value="protein"/>
</dbReference>
<dbReference type="GO" id="GO:0005737">
    <property type="term" value="C:cytoplasm"/>
    <property type="evidence" value="ECO:0000314"/>
    <property type="project" value="SGD"/>
</dbReference>
<dbReference type="GO" id="GO:0010494">
    <property type="term" value="C:cytoplasmic stress granule"/>
    <property type="evidence" value="ECO:0000314"/>
    <property type="project" value="SGD"/>
</dbReference>
<dbReference type="GO" id="GO:0005739">
    <property type="term" value="C:mitochondrion"/>
    <property type="evidence" value="ECO:0007005"/>
    <property type="project" value="SGD"/>
</dbReference>
<dbReference type="GO" id="GO:0005634">
    <property type="term" value="C:nucleus"/>
    <property type="evidence" value="ECO:0000314"/>
    <property type="project" value="SGD"/>
</dbReference>
<dbReference type="GO" id="GO:0042802">
    <property type="term" value="F:identical protein binding"/>
    <property type="evidence" value="ECO:0000353"/>
    <property type="project" value="IntAct"/>
</dbReference>
<dbReference type="GO" id="GO:0003729">
    <property type="term" value="F:mRNA binding"/>
    <property type="evidence" value="ECO:0000314"/>
    <property type="project" value="SGD"/>
</dbReference>
<dbReference type="GO" id="GO:0051082">
    <property type="term" value="F:unfolded protein binding"/>
    <property type="evidence" value="ECO:0000314"/>
    <property type="project" value="SGD"/>
</dbReference>
<dbReference type="GO" id="GO:0034605">
    <property type="term" value="P:cellular response to heat"/>
    <property type="evidence" value="ECO:0000314"/>
    <property type="project" value="SGD"/>
</dbReference>
<dbReference type="GO" id="GO:0006457">
    <property type="term" value="P:protein folding"/>
    <property type="evidence" value="ECO:0000314"/>
    <property type="project" value="SGD"/>
</dbReference>
<dbReference type="CDD" id="cd06464">
    <property type="entry name" value="ACD_sHsps-like"/>
    <property type="match status" value="1"/>
</dbReference>
<dbReference type="FunFam" id="2.60.40.790:FF:000065">
    <property type="entry name" value="Heat shock protein"/>
    <property type="match status" value="1"/>
</dbReference>
<dbReference type="Gene3D" id="2.60.40.790">
    <property type="match status" value="1"/>
</dbReference>
<dbReference type="InterPro" id="IPR002068">
    <property type="entry name" value="A-crystallin/Hsp20_dom"/>
</dbReference>
<dbReference type="InterPro" id="IPR008978">
    <property type="entry name" value="HSP20-like_chaperone"/>
</dbReference>
<dbReference type="InterPro" id="IPR031107">
    <property type="entry name" value="Small_HSP"/>
</dbReference>
<dbReference type="PANTHER" id="PTHR11527">
    <property type="entry name" value="HEAT-SHOCK PROTEIN 20 FAMILY MEMBER"/>
    <property type="match status" value="1"/>
</dbReference>
<dbReference type="Pfam" id="PF00011">
    <property type="entry name" value="HSP20"/>
    <property type="match status" value="1"/>
</dbReference>
<dbReference type="SUPFAM" id="SSF49764">
    <property type="entry name" value="HSP20-like chaperones"/>
    <property type="match status" value="1"/>
</dbReference>
<dbReference type="PROSITE" id="PS01031">
    <property type="entry name" value="SHSP"/>
    <property type="match status" value="1"/>
</dbReference>
<sequence>MSFNSPFFDFFDNINNEVDAFNRLLGEGGLRGYAPRRQLANTPAKDSTGKEVARPNNYAGALYDPRDETLDDWFDNDLSLFPSGFGFPRSVAVPVDILDHDNNYELKVVVPGVKSKKDIDIEYHQNKNQILVSGEIPSTLNEESKDKVKVKESSSGKFKRVITLPDYPGVDADNIKADYANGVLTLTVPKLKPQKDGKNHVKKIEVSSQESWGN</sequence>
<proteinExistence type="evidence at protein level"/>